<gene>
    <name evidence="7" type="primary">Polr2A</name>
    <name evidence="6" type="synonym">RPB1</name>
    <name evidence="5" type="synonym">RpII215</name>
    <name evidence="7" type="ORF">CG1554</name>
</gene>
<accession>P04052</accession>
<accession>Q9VYX6</accession>
<sequence>MSTPTDSKAPLRQVKRVQFGILSPDEIRRMSVTEGGVQFAETMEGGRPKLGGLMDPRQGVIDRTSRCQTCAGNMTECPGHFGHIDLAKPVFHIGFITKTIKILRCVCFYCSKMLVSPHNPKIKEIVMKSRGQPRKRLAYVYDLCKGKTICEGGEDMDLTKENQQPDPNKKPGHGGCGHYQPSIRRTGLDLTAEWKHQNEDSQEKKIVVSAERVWEILKHITDEECFILGMDPKYARPDWMIVTVLPVPPLAVRPAVVMFGAAKNQDDLTHKLSDIIKANNELRKNEASGAAAHVIQENIKMLQFHVATLVDNDMPGMPRAMQKSGKPLKAIKARLKGKEGRIRGNLMGKRVDFSARTVITPDPNLRIDQVGVPRSIAQNLTFPELVTPFNIDRMQELVRRGNSQYPGAKYIVRDNGERIDLRFHPKSSDLHLQCGYKVERHLRDDDLVIFNRQPTLHKMSMMGHRVKVLPWSTFRMNLSCTSPYNADFDGDEMNLHVPQSMETRAEVENIHITPRQIITPQANKPVMGIVQDTLTAVRKMTKRDVFITREQVMNLLMFLPTWDAKMPQPCILKPRPLWTGKQIFSLIIPGNVNMIRTHSTHPDEEDEGPYKWISPGDTKVMVEHGELIMGILCKKSLGTSAGSLLHICFLELGHDIAGRFYGNIQTVINNWLLFEGHSIGIGDTIADPQTYNEIQQAIKKAKDDVINVIQKAHNMELEPTPGNTLRQTFENKVNRILNDARDKTGGSAKKSLTEYNNLKAMVVSGSKGSNINISQVIACVGQQNVEGKRIPYGFRKRTLPHFIKDDYGPESRGFVENSYLAGLTPSEFYFHAMGGREGLIDTAVKTAETGYIQRRLIKAMESVMVNYDGTVRNSVGQLIQLRYGEDGLCGELVEFQNMPTVKLSNKSFEKRFKFDWSNERLMKKVFTDDVIKEMTDSSEAIQELEAEWDRLVSDRDSLRQIFPNGESKVVLPCNLQRMIWNVQKIFHINKRLPTDLSPIRVIKGVKTLLERCVIVTGNDRISKQANENATLLFQCLIRSTLCTKYVSEEFRLSTEAFEWLVGEIETRFQQAQANPGEMVGALAAQSLGEPATQMTLNTFHFAGVSSKNVTLGVPRLKEIINISKKPKAPSLTVFLTGGAARDAEKAKNVLCRLEHTTLRKVTANTAIYYDPDPQRTVISEDQEFVNVYYEMPDFDPTRISPWLLRIELDRKRMTDKKLTMEQIAEKINVGFGEDLNCIFNDDNADKLVLRIRIMNNEENKFQDEDEAVDKMEDDMFLRCIEANMLSDMTLQGIEAIGKVYMHLPQTDSKKRIVITETGEFKAIGEWLLETDGTSMMKVLSERDVDPIRTSSNDICEIFQVLGIEAVRKSVEKEMNAVLQFYGLYVNYRHLALLCDVMTAKGHLMAITRHGINRQDTGALMRCSFEETVDVLMDAAAHAETDPMRGVSENIIMGQLPKMGTGCFDLLLDAEKCRFGIEIPNTLGNSMLGGAAMFIGGGSTPSMTPPMTPWANCNTPRYFSPPGHVSAMTPGGPSFSPSAASDASGMSPSWSPAHPGSSPSSPGPSMSPYFPASPSVSPSYSPTSPNYTASSPGGASPNYSPSSPNYSPTSPLYASPRYASTTPNFNPQSTGYSPSSSGYSPTSPVYSPTVQFQSSPSFAGSGSNIYSPGNAYSPSSSNYSPNSPSYSPTSPSYSPSSPSYSPTSPCYSPTSPSYSPTSPNYTPVTPSYSPTSPNYSASPQYSPASPAYSQTGVKYSPTSPTYSPPSPSYDGSPGSPQYTPGSPQYSPASPKYSPTSPLYSPSSPQHSPSNQYSPTGSTYSATSPRYSPNMSIYSPSSTKYSPTSPTYTPTARNYSPTSPMYSPTAPSHYSPTSPAYSPSSPTFEESED</sequence>
<reference key="1">
    <citation type="journal article" date="1989" name="Mol. Gen. Genet.">
        <title>Analysis of the gene encoding the largest subunit of RNA polymerase II in Drosophila.</title>
        <authorList>
            <person name="Jokerst R.S."/>
            <person name="Weeks J.R."/>
            <person name="Zehring W.A."/>
            <person name="Greenleaf A.L."/>
        </authorList>
    </citation>
    <scope>NUCLEOTIDE SEQUENCE [GENOMIC DNA]</scope>
</reference>
<reference key="2">
    <citation type="journal article" date="2000" name="Science">
        <title>The genome sequence of Drosophila melanogaster.</title>
        <authorList>
            <person name="Adams M.D."/>
            <person name="Celniker S.E."/>
            <person name="Holt R.A."/>
            <person name="Evans C.A."/>
            <person name="Gocayne J.D."/>
            <person name="Amanatides P.G."/>
            <person name="Scherer S.E."/>
            <person name="Li P.W."/>
            <person name="Hoskins R.A."/>
            <person name="Galle R.F."/>
            <person name="George R.A."/>
            <person name="Lewis S.E."/>
            <person name="Richards S."/>
            <person name="Ashburner M."/>
            <person name="Henderson S.N."/>
            <person name="Sutton G.G."/>
            <person name="Wortman J.R."/>
            <person name="Yandell M.D."/>
            <person name="Zhang Q."/>
            <person name="Chen L.X."/>
            <person name="Brandon R.C."/>
            <person name="Rogers Y.-H.C."/>
            <person name="Blazej R.G."/>
            <person name="Champe M."/>
            <person name="Pfeiffer B.D."/>
            <person name="Wan K.H."/>
            <person name="Doyle C."/>
            <person name="Baxter E.G."/>
            <person name="Helt G."/>
            <person name="Nelson C.R."/>
            <person name="Miklos G.L.G."/>
            <person name="Abril J.F."/>
            <person name="Agbayani A."/>
            <person name="An H.-J."/>
            <person name="Andrews-Pfannkoch C."/>
            <person name="Baldwin D."/>
            <person name="Ballew R.M."/>
            <person name="Basu A."/>
            <person name="Baxendale J."/>
            <person name="Bayraktaroglu L."/>
            <person name="Beasley E.M."/>
            <person name="Beeson K.Y."/>
            <person name="Benos P.V."/>
            <person name="Berman B.P."/>
            <person name="Bhandari D."/>
            <person name="Bolshakov S."/>
            <person name="Borkova D."/>
            <person name="Botchan M.R."/>
            <person name="Bouck J."/>
            <person name="Brokstein P."/>
            <person name="Brottier P."/>
            <person name="Burtis K.C."/>
            <person name="Busam D.A."/>
            <person name="Butler H."/>
            <person name="Cadieu E."/>
            <person name="Center A."/>
            <person name="Chandra I."/>
            <person name="Cherry J.M."/>
            <person name="Cawley S."/>
            <person name="Dahlke C."/>
            <person name="Davenport L.B."/>
            <person name="Davies P."/>
            <person name="de Pablos B."/>
            <person name="Delcher A."/>
            <person name="Deng Z."/>
            <person name="Mays A.D."/>
            <person name="Dew I."/>
            <person name="Dietz S.M."/>
            <person name="Dodson K."/>
            <person name="Doup L.E."/>
            <person name="Downes M."/>
            <person name="Dugan-Rocha S."/>
            <person name="Dunkov B.C."/>
            <person name="Dunn P."/>
            <person name="Durbin K.J."/>
            <person name="Evangelista C.C."/>
            <person name="Ferraz C."/>
            <person name="Ferriera S."/>
            <person name="Fleischmann W."/>
            <person name="Fosler C."/>
            <person name="Gabrielian A.E."/>
            <person name="Garg N.S."/>
            <person name="Gelbart W.M."/>
            <person name="Glasser K."/>
            <person name="Glodek A."/>
            <person name="Gong F."/>
            <person name="Gorrell J.H."/>
            <person name="Gu Z."/>
            <person name="Guan P."/>
            <person name="Harris M."/>
            <person name="Harris N.L."/>
            <person name="Harvey D.A."/>
            <person name="Heiman T.J."/>
            <person name="Hernandez J.R."/>
            <person name="Houck J."/>
            <person name="Hostin D."/>
            <person name="Houston K.A."/>
            <person name="Howland T.J."/>
            <person name="Wei M.-H."/>
            <person name="Ibegwam C."/>
            <person name="Jalali M."/>
            <person name="Kalush F."/>
            <person name="Karpen G.H."/>
            <person name="Ke Z."/>
            <person name="Kennison J.A."/>
            <person name="Ketchum K.A."/>
            <person name="Kimmel B.E."/>
            <person name="Kodira C.D."/>
            <person name="Kraft C.L."/>
            <person name="Kravitz S."/>
            <person name="Kulp D."/>
            <person name="Lai Z."/>
            <person name="Lasko P."/>
            <person name="Lei Y."/>
            <person name="Levitsky A.A."/>
            <person name="Li J.H."/>
            <person name="Li Z."/>
            <person name="Liang Y."/>
            <person name="Lin X."/>
            <person name="Liu X."/>
            <person name="Mattei B."/>
            <person name="McIntosh T.C."/>
            <person name="McLeod M.P."/>
            <person name="McPherson D."/>
            <person name="Merkulov G."/>
            <person name="Milshina N.V."/>
            <person name="Mobarry C."/>
            <person name="Morris J."/>
            <person name="Moshrefi A."/>
            <person name="Mount S.M."/>
            <person name="Moy M."/>
            <person name="Murphy B."/>
            <person name="Murphy L."/>
            <person name="Muzny D.M."/>
            <person name="Nelson D.L."/>
            <person name="Nelson D.R."/>
            <person name="Nelson K.A."/>
            <person name="Nixon K."/>
            <person name="Nusskern D.R."/>
            <person name="Pacleb J.M."/>
            <person name="Palazzolo M."/>
            <person name="Pittman G.S."/>
            <person name="Pan S."/>
            <person name="Pollard J."/>
            <person name="Puri V."/>
            <person name="Reese M.G."/>
            <person name="Reinert K."/>
            <person name="Remington K."/>
            <person name="Saunders R.D.C."/>
            <person name="Scheeler F."/>
            <person name="Shen H."/>
            <person name="Shue B.C."/>
            <person name="Siden-Kiamos I."/>
            <person name="Simpson M."/>
            <person name="Skupski M.P."/>
            <person name="Smith T.J."/>
            <person name="Spier E."/>
            <person name="Spradling A.C."/>
            <person name="Stapleton M."/>
            <person name="Strong R."/>
            <person name="Sun E."/>
            <person name="Svirskas R."/>
            <person name="Tector C."/>
            <person name="Turner R."/>
            <person name="Venter E."/>
            <person name="Wang A.H."/>
            <person name="Wang X."/>
            <person name="Wang Z.-Y."/>
            <person name="Wassarman D.A."/>
            <person name="Weinstock G.M."/>
            <person name="Weissenbach J."/>
            <person name="Williams S.M."/>
            <person name="Woodage T."/>
            <person name="Worley K.C."/>
            <person name="Wu D."/>
            <person name="Yang S."/>
            <person name="Yao Q.A."/>
            <person name="Ye J."/>
            <person name="Yeh R.-F."/>
            <person name="Zaveri J.S."/>
            <person name="Zhan M."/>
            <person name="Zhang G."/>
            <person name="Zhao Q."/>
            <person name="Zheng L."/>
            <person name="Zheng X.H."/>
            <person name="Zhong F.N."/>
            <person name="Zhong W."/>
            <person name="Zhou X."/>
            <person name="Zhu S.C."/>
            <person name="Zhu X."/>
            <person name="Smith H.O."/>
            <person name="Gibbs R.A."/>
            <person name="Myers E.W."/>
            <person name="Rubin G.M."/>
            <person name="Venter J.C."/>
        </authorList>
    </citation>
    <scope>NUCLEOTIDE SEQUENCE [LARGE SCALE GENOMIC DNA]</scope>
    <source>
        <strain>Berkeley</strain>
    </source>
</reference>
<reference key="3">
    <citation type="journal article" date="2002" name="Genome Biol.">
        <title>Annotation of the Drosophila melanogaster euchromatic genome: a systematic review.</title>
        <authorList>
            <person name="Misra S."/>
            <person name="Crosby M.A."/>
            <person name="Mungall C.J."/>
            <person name="Matthews B.B."/>
            <person name="Campbell K.S."/>
            <person name="Hradecky P."/>
            <person name="Huang Y."/>
            <person name="Kaminker J.S."/>
            <person name="Millburn G.H."/>
            <person name="Prochnik S.E."/>
            <person name="Smith C.D."/>
            <person name="Tupy J.L."/>
            <person name="Whitfield E.J."/>
            <person name="Bayraktaroglu L."/>
            <person name="Berman B.P."/>
            <person name="Bettencourt B.R."/>
            <person name="Celniker S.E."/>
            <person name="de Grey A.D.N.J."/>
            <person name="Drysdale R.A."/>
            <person name="Harris N.L."/>
            <person name="Richter J."/>
            <person name="Russo S."/>
            <person name="Schroeder A.J."/>
            <person name="Shu S.Q."/>
            <person name="Stapleton M."/>
            <person name="Yamada C."/>
            <person name="Ashburner M."/>
            <person name="Gelbart W.M."/>
            <person name="Rubin G.M."/>
            <person name="Lewis S.E."/>
        </authorList>
    </citation>
    <scope>GENOME REANNOTATION</scope>
    <source>
        <strain>Berkeley</strain>
    </source>
</reference>
<reference key="4">
    <citation type="journal article" date="1986" name="Mol. Cell. Biol.">
        <title>Sites of P element insertion and structures of P element deletions in the 5' region of Drosophila melanogaster RpII215.</title>
        <authorList>
            <person name="Searles L.L."/>
            <person name="Greenleaf A.L."/>
            <person name="Kemp W.E."/>
            <person name="Voelker R.A."/>
        </authorList>
    </citation>
    <scope>NUCLEOTIDE SEQUENCE [GENOMIC DNA] OF 1-27</scope>
</reference>
<reference key="5">
    <citation type="journal article" date="1985" name="Cell">
        <title>Structure of the eukaryotic transcription apparatus: features of the gene for the largest subunit of Drosophila RNA polymerase II.</title>
        <authorList>
            <person name="Biggs J."/>
            <person name="Searles L.L."/>
            <person name="Greenleaf A.L."/>
        </authorList>
    </citation>
    <scope>NUCLEOTIDE SEQUENCE [GENOMIC DNA] OF 1-472</scope>
</reference>
<reference key="6">
    <citation type="journal article" date="1995" name="Mol. Gen. Genet.">
        <title>Mapping of linear epitopes recognized by monoclonal antibodies with gene-fragment phage display libraries.</title>
        <authorList>
            <person name="Petersen G."/>
            <person name="Song D."/>
            <person name="Hugle-Dorr B."/>
            <person name="Oldenburg I."/>
            <person name="Bautz E.K."/>
        </authorList>
    </citation>
    <scope>NUCLEOTIDE SEQUENCE [GENOMIC DNA] OF 778-827</scope>
</reference>
<reference key="7">
    <citation type="journal article" date="1988" name="Mol. Cell. Biol.">
        <title>The C-terminal domain of the largest subunit of RNA polymerase II of Saccharomyces cerevisiae, Drosophila melanogaster, and mammals: a conserved structure with an essential function.</title>
        <authorList>
            <person name="Allison L.A."/>
            <person name="Wong J.K.-C."/>
            <person name="Fitzpatrick V.D."/>
            <person name="Moyle M."/>
            <person name="Ingles C.J."/>
        </authorList>
    </citation>
    <scope>NUCLEOTIDE SEQUENCE [GENOMIC DNA] OF 1441-1887</scope>
</reference>
<keyword id="KW-0002">3D-structure</keyword>
<keyword id="KW-0238">DNA-binding</keyword>
<keyword id="KW-0240">DNA-directed RNA polymerase</keyword>
<keyword id="KW-1017">Isopeptide bond</keyword>
<keyword id="KW-0460">Magnesium</keyword>
<keyword id="KW-0479">Metal-binding</keyword>
<keyword id="KW-0548">Nucleotidyltransferase</keyword>
<keyword id="KW-0539">Nucleus</keyword>
<keyword id="KW-0597">Phosphoprotein</keyword>
<keyword id="KW-1185">Reference proteome</keyword>
<keyword id="KW-0677">Repeat</keyword>
<keyword id="KW-0804">Transcription</keyword>
<keyword id="KW-0808">Transferase</keyword>
<keyword id="KW-0832">Ubl conjugation</keyword>
<keyword id="KW-0862">Zinc</keyword>
<evidence type="ECO:0000250" key="1"/>
<evidence type="ECO:0000250" key="2">
    <source>
        <dbReference type="UniProtKB" id="P04050"/>
    </source>
</evidence>
<evidence type="ECO:0000256" key="3">
    <source>
        <dbReference type="SAM" id="MobiDB-lite"/>
    </source>
</evidence>
<evidence type="ECO:0000303" key="4">
    <source>
    </source>
</evidence>
<evidence type="ECO:0000303" key="5">
    <source>
    </source>
</evidence>
<evidence type="ECO:0000305" key="6"/>
<evidence type="ECO:0000312" key="7">
    <source>
        <dbReference type="FlyBase" id="FBgn0003277"/>
    </source>
</evidence>
<comment type="function">
    <text evidence="1">DNA-dependent RNA polymerase catalyzes the transcription of DNA into RNA using the four ribonucleoside triphosphates as substrates. Largest and catalytic component of RNA polymerase II which synthesizes mRNA precursors and many functional non-coding RNAs. Forms the polymerase active center together with the second largest subunit. Pol II is the central component of the basal RNA polymerase II transcription machinery. It is composed of mobile elements that move relative to each other. RPB1 is part of the core element with the central large cleft, the clamp element that moves to open and close the cleft and the jaws that are thought to grab the incoming DNA template. At the start of transcription, a single-stranded DNA template strand of the promoter is positioned within the central active site cleft of Pol II. A bridging helix emanates from RPB1 and crosses the cleft near the catalytic site and is thought to promote translocation of Pol II by acting as a ratchet that moves the RNA-DNA hybrid through the active site by switching from straight to bent conformations at each step of nucleotide addition. During transcription elongation, Pol II moves on the template as the transcript elongates. Elongation is influenced by the phosphorylation status of the C-terminal domain (CTD) of Pol II largest subunit (RPB1), which serves as a platform for assembly of factors that regulate transcription initiation, elongation, termination and mRNA processing (By similarity).</text>
</comment>
<comment type="catalytic activity">
    <reaction>
        <text>RNA(n) + a ribonucleoside 5'-triphosphate = RNA(n+1) + diphosphate</text>
        <dbReference type="Rhea" id="RHEA:21248"/>
        <dbReference type="Rhea" id="RHEA-COMP:14527"/>
        <dbReference type="Rhea" id="RHEA-COMP:17342"/>
        <dbReference type="ChEBI" id="CHEBI:33019"/>
        <dbReference type="ChEBI" id="CHEBI:61557"/>
        <dbReference type="ChEBI" id="CHEBI:140395"/>
        <dbReference type="EC" id="2.7.7.6"/>
    </reaction>
</comment>
<comment type="subunit">
    <text evidence="1">Component of the RNA polymerase II (Pol II) complex consisting of 12 subunits.</text>
</comment>
<comment type="subcellular location">
    <subcellularLocation>
        <location evidence="2">Nucleus</location>
    </subcellularLocation>
</comment>
<comment type="domain">
    <text evidence="6">The C-terminal domain (CTD) serves as a platform for assembly of factors that regulate transcription initiation, elongation, termination and mRNA processing.</text>
</comment>
<comment type="PTM">
    <text evidence="2">The tandem 7 residues repeats in the C-terminal domain (CTD) can be highly phosphorylated. The phosphorylation activates Pol II. Phosphorylation occurs mainly at residues 'Ser-2' and 'Ser-5' of the heptapeptide repeat. The phosphorylation state is believed to result from the balanced action of site-specific CTD kinases and phosphatase, and a 'CTD code' that specifies the position of Pol II within the transcription cycle has been proposed.</text>
</comment>
<comment type="PTM">
    <text evidence="2">Following transcription stress, the elongating form of RNA polymerase II (RNA pol IIo) is polyubiquitinated via 'Lys-63'-linkages on Lys-1260 at DNA damage sites without leading to degradation: ubiquitination promotes RNA pol IIo backtracking to allow access by the transcription-coupled nucleotide excision repair (TC-NER) machinery. Subsequent DEF1-dependent polyubiquitination by the elongin complex via 'Lys-48'-linkages may lead to proteasome-mediated degradation; presumably at stalled RNA pol II where TC-NER has failed, to halt global transcription and enable 'last resort' DNA repair pathways.</text>
</comment>
<comment type="miscellaneous">
    <text>The binding of ribonucleoside triphosphate to the RNA polymerase II transcribing complex probably involves a two-step mechanism. The initial binding seems to occur at the entry (E) site and involves a magnesium ion temporarily coordinated by three conserved aspartate residues of the two largest RNA Pol II subunits. The ribonucleoside triphosphate is transferred by a rotation to the nucleotide addition (A) site for pairing with the template DNA. The catalytic A site involves three conserved aspartate residues of the RNA Pol II largest subunit which permanently coordinate a second magnesium ion.</text>
</comment>
<comment type="similarity">
    <text evidence="6">Belongs to the RNA polymerase beta' chain family.</text>
</comment>
<organism>
    <name type="scientific">Drosophila melanogaster</name>
    <name type="common">Fruit fly</name>
    <dbReference type="NCBI Taxonomy" id="7227"/>
    <lineage>
        <taxon>Eukaryota</taxon>
        <taxon>Metazoa</taxon>
        <taxon>Ecdysozoa</taxon>
        <taxon>Arthropoda</taxon>
        <taxon>Hexapoda</taxon>
        <taxon>Insecta</taxon>
        <taxon>Pterygota</taxon>
        <taxon>Neoptera</taxon>
        <taxon>Endopterygota</taxon>
        <taxon>Diptera</taxon>
        <taxon>Brachycera</taxon>
        <taxon>Muscomorpha</taxon>
        <taxon>Ephydroidea</taxon>
        <taxon>Drosophilidae</taxon>
        <taxon>Drosophila</taxon>
        <taxon>Sophophora</taxon>
    </lineage>
</organism>
<dbReference type="EC" id="2.7.7.6"/>
<dbReference type="EMBL" id="M27431">
    <property type="protein sequence ID" value="AAA28868.1"/>
    <property type="molecule type" value="Genomic_DNA"/>
</dbReference>
<dbReference type="EMBL" id="AE014298">
    <property type="protein sequence ID" value="AAF48057.1"/>
    <property type="molecule type" value="Genomic_DNA"/>
</dbReference>
<dbReference type="EMBL" id="M14203">
    <property type="protein sequence ID" value="AAA28864.1"/>
    <property type="molecule type" value="Genomic_DNA"/>
</dbReference>
<dbReference type="EMBL" id="M11798">
    <property type="protein sequence ID" value="AAA28863.1"/>
    <property type="molecule type" value="Genomic_DNA"/>
</dbReference>
<dbReference type="EMBL" id="M19537">
    <property type="protein sequence ID" value="AAA28827.1"/>
    <property type="molecule type" value="Genomic_DNA"/>
</dbReference>
<dbReference type="PIR" id="S04457">
    <property type="entry name" value="RNFF2L"/>
</dbReference>
<dbReference type="RefSeq" id="NP_511124.1">
    <property type="nucleotide sequence ID" value="NM_078569.3"/>
</dbReference>
<dbReference type="PDB" id="9MU9">
    <property type="method" value="EM"/>
    <property type="resolution" value="7.80 A"/>
    <property type="chains" value="A=7-1476"/>
</dbReference>
<dbReference type="PDBsum" id="9MU9"/>
<dbReference type="EMDB" id="EMD-48626"/>
<dbReference type="SMR" id="P04052"/>
<dbReference type="BioGRID" id="58510">
    <property type="interactions" value="47"/>
</dbReference>
<dbReference type="ComplexPortal" id="CPX-2625">
    <property type="entry name" value="DNA-directed RNA polymerase II complex"/>
</dbReference>
<dbReference type="DIP" id="DIP-22282N"/>
<dbReference type="FunCoup" id="P04052">
    <property type="interactions" value="1883"/>
</dbReference>
<dbReference type="IntAct" id="P04052">
    <property type="interactions" value="22"/>
</dbReference>
<dbReference type="MINT" id="P04052"/>
<dbReference type="STRING" id="7227.FBpp0073387"/>
<dbReference type="GlyGen" id="P04052">
    <property type="glycosylation" value="4 sites, 1 O-linked glycan (1 site)"/>
</dbReference>
<dbReference type="iPTMnet" id="P04052"/>
<dbReference type="PaxDb" id="7227-FBpp0073387"/>
<dbReference type="ABCD" id="P04052">
    <property type="antibodies" value="1 sequenced antibody"/>
</dbReference>
<dbReference type="DNASU" id="32100"/>
<dbReference type="EnsemblMetazoa" id="FBtr0073542">
    <property type="protein sequence ID" value="FBpp0073387"/>
    <property type="gene ID" value="FBgn0003277"/>
</dbReference>
<dbReference type="GeneID" id="32100"/>
<dbReference type="KEGG" id="dme:Dmel_CG1554"/>
<dbReference type="AGR" id="FB:FBgn0003277"/>
<dbReference type="CTD" id="5430"/>
<dbReference type="FlyBase" id="FBgn0003277">
    <property type="gene designation" value="Polr2A"/>
</dbReference>
<dbReference type="VEuPathDB" id="VectorBase:FBgn0003277"/>
<dbReference type="eggNOG" id="KOG0260">
    <property type="taxonomic scope" value="Eukaryota"/>
</dbReference>
<dbReference type="HOGENOM" id="CLU_000487_1_1_1"/>
<dbReference type="InParanoid" id="P04052"/>
<dbReference type="OMA" id="KPCMGIV"/>
<dbReference type="OrthoDB" id="270392at2759"/>
<dbReference type="PhylomeDB" id="P04052"/>
<dbReference type="Reactome" id="R-DME-112382">
    <property type="pathway name" value="Formation of RNA Pol II elongation complex"/>
</dbReference>
<dbReference type="Reactome" id="R-DME-113418">
    <property type="pathway name" value="Formation of the Early Elongation Complex"/>
</dbReference>
<dbReference type="Reactome" id="R-DME-5578749">
    <property type="pathway name" value="Transcriptional regulation by small RNAs"/>
</dbReference>
<dbReference type="Reactome" id="R-DME-674695">
    <property type="pathway name" value="RNA Polymerase II Pre-transcription Events"/>
</dbReference>
<dbReference type="Reactome" id="R-DME-6781823">
    <property type="pathway name" value="Formation of TC-NER Pre-Incision Complex"/>
</dbReference>
<dbReference type="Reactome" id="R-DME-6782135">
    <property type="pathway name" value="Dual incision in TC-NER"/>
</dbReference>
<dbReference type="Reactome" id="R-DME-6782210">
    <property type="pathway name" value="Gap-filling DNA repair synthesis and ligation in TC-NER"/>
</dbReference>
<dbReference type="Reactome" id="R-DME-6796648">
    <property type="pathway name" value="TP53 Regulates Transcription of DNA Repair Genes"/>
</dbReference>
<dbReference type="Reactome" id="R-DME-6807505">
    <property type="pathway name" value="RNA polymerase II transcribes snRNA genes"/>
</dbReference>
<dbReference type="Reactome" id="R-DME-72086">
    <property type="pathway name" value="mRNA Capping"/>
</dbReference>
<dbReference type="Reactome" id="R-DME-72163">
    <property type="pathway name" value="mRNA Splicing - Major Pathway"/>
</dbReference>
<dbReference type="Reactome" id="R-DME-72165">
    <property type="pathway name" value="mRNA Splicing - Minor Pathway"/>
</dbReference>
<dbReference type="Reactome" id="R-DME-72203">
    <property type="pathway name" value="Processing of Capped Intron-Containing Pre-mRNA"/>
</dbReference>
<dbReference type="Reactome" id="R-DME-73776">
    <property type="pathway name" value="RNA Polymerase II Promoter Escape"/>
</dbReference>
<dbReference type="Reactome" id="R-DME-73779">
    <property type="pathway name" value="RNA Polymerase II Transcription Pre-Initiation And Promoter Opening"/>
</dbReference>
<dbReference type="Reactome" id="R-DME-75953">
    <property type="pathway name" value="RNA Polymerase II Transcription Initiation"/>
</dbReference>
<dbReference type="Reactome" id="R-DME-75955">
    <property type="pathway name" value="RNA Polymerase II Transcription Elongation"/>
</dbReference>
<dbReference type="Reactome" id="R-DME-76042">
    <property type="pathway name" value="RNA Polymerase II Transcription Initiation And Promoter Clearance"/>
</dbReference>
<dbReference type="Reactome" id="R-DME-77075">
    <property type="pathway name" value="RNA Pol II CTD phosphorylation and interaction with CE"/>
</dbReference>
<dbReference type="Reactome" id="R-DME-9018519">
    <property type="pathway name" value="Estrogen-dependent gene expression"/>
</dbReference>
<dbReference type="SignaLink" id="P04052"/>
<dbReference type="BioGRID-ORCS" id="32100">
    <property type="hits" value="0 hits in 1 CRISPR screen"/>
</dbReference>
<dbReference type="GenomeRNAi" id="32100"/>
<dbReference type="PRO" id="PR:P04052"/>
<dbReference type="Proteomes" id="UP000000803">
    <property type="component" value="Chromosome X"/>
</dbReference>
<dbReference type="Bgee" id="FBgn0003277">
    <property type="expression patterns" value="Expressed in cleaving embryo and 260 other cell types or tissues"/>
</dbReference>
<dbReference type="ExpressionAtlas" id="P04052">
    <property type="expression patterns" value="baseline and differential"/>
</dbReference>
<dbReference type="GO" id="GO:0005739">
    <property type="term" value="C:mitochondrion"/>
    <property type="evidence" value="ECO:0007669"/>
    <property type="project" value="GOC"/>
</dbReference>
<dbReference type="GO" id="GO:0005634">
    <property type="term" value="C:nucleus"/>
    <property type="evidence" value="ECO:0000314"/>
    <property type="project" value="FlyBase"/>
</dbReference>
<dbReference type="GO" id="GO:0005700">
    <property type="term" value="C:polytene chromosome"/>
    <property type="evidence" value="ECO:0000314"/>
    <property type="project" value="FlyBase"/>
</dbReference>
<dbReference type="GO" id="GO:0005703">
    <property type="term" value="C:polytene chromosome puff"/>
    <property type="evidence" value="ECO:0000314"/>
    <property type="project" value="UniProtKB"/>
</dbReference>
<dbReference type="GO" id="GO:0005665">
    <property type="term" value="C:RNA polymerase II, core complex"/>
    <property type="evidence" value="ECO:0000314"/>
    <property type="project" value="FlyBase"/>
</dbReference>
<dbReference type="GO" id="GO:0003677">
    <property type="term" value="F:DNA binding"/>
    <property type="evidence" value="ECO:0007669"/>
    <property type="project" value="UniProtKB-KW"/>
</dbReference>
<dbReference type="GO" id="GO:0003899">
    <property type="term" value="F:DNA-directed RNA polymerase activity"/>
    <property type="evidence" value="ECO:0000314"/>
    <property type="project" value="FlyBase"/>
</dbReference>
<dbReference type="GO" id="GO:0046872">
    <property type="term" value="F:metal ion binding"/>
    <property type="evidence" value="ECO:0007669"/>
    <property type="project" value="UniProtKB-KW"/>
</dbReference>
<dbReference type="GO" id="GO:0006366">
    <property type="term" value="P:transcription by RNA polymerase II"/>
    <property type="evidence" value="ECO:0000250"/>
    <property type="project" value="FlyBase"/>
</dbReference>
<dbReference type="CDD" id="cd02584">
    <property type="entry name" value="RNAP_II_Rpb1_C"/>
    <property type="match status" value="1"/>
</dbReference>
<dbReference type="CDD" id="cd02733">
    <property type="entry name" value="RNAP_II_RPB1_N"/>
    <property type="match status" value="1"/>
</dbReference>
<dbReference type="DisProt" id="DP01433"/>
<dbReference type="FunFam" id="2.40.40.20:FF:000019">
    <property type="entry name" value="DNA-directed RNA polymerase II subunit RPB1"/>
    <property type="match status" value="1"/>
</dbReference>
<dbReference type="FunFam" id="1.10.132.30:FF:000001">
    <property type="entry name" value="DNA-directed RNA polymerase subunit"/>
    <property type="match status" value="1"/>
</dbReference>
<dbReference type="FunFam" id="1.10.150.390:FF:000001">
    <property type="entry name" value="DNA-directed RNA polymerase subunit"/>
    <property type="match status" value="1"/>
</dbReference>
<dbReference type="FunFam" id="1.10.274.100:FF:000001">
    <property type="entry name" value="DNA-directed RNA polymerase subunit"/>
    <property type="match status" value="1"/>
</dbReference>
<dbReference type="FunFam" id="3.30.1360.140:FF:000001">
    <property type="entry name" value="DNA-directed RNA polymerase subunit"/>
    <property type="match status" value="1"/>
</dbReference>
<dbReference type="FunFam" id="3.30.1490.180:FF:000001">
    <property type="entry name" value="DNA-directed RNA polymerase subunit"/>
    <property type="match status" value="1"/>
</dbReference>
<dbReference type="FunFam" id="4.10.860.120:FF:000005">
    <property type="entry name" value="DNA-directed RNA polymerase subunit"/>
    <property type="match status" value="1"/>
</dbReference>
<dbReference type="Gene3D" id="1.10.132.30">
    <property type="match status" value="1"/>
</dbReference>
<dbReference type="Gene3D" id="1.10.150.390">
    <property type="match status" value="1"/>
</dbReference>
<dbReference type="Gene3D" id="2.40.40.20">
    <property type="match status" value="1"/>
</dbReference>
<dbReference type="Gene3D" id="3.30.1360.140">
    <property type="match status" value="1"/>
</dbReference>
<dbReference type="Gene3D" id="6.10.250.2940">
    <property type="match status" value="1"/>
</dbReference>
<dbReference type="Gene3D" id="6.20.50.80">
    <property type="match status" value="1"/>
</dbReference>
<dbReference type="Gene3D" id="3.30.1490.180">
    <property type="entry name" value="RNA polymerase ii"/>
    <property type="match status" value="1"/>
</dbReference>
<dbReference type="Gene3D" id="4.10.860.120">
    <property type="entry name" value="RNA polymerase II, clamp domain"/>
    <property type="match status" value="2"/>
</dbReference>
<dbReference type="Gene3D" id="1.10.274.100">
    <property type="entry name" value="RNA polymerase Rpb1, domain 3"/>
    <property type="match status" value="1"/>
</dbReference>
<dbReference type="InterPro" id="IPR045867">
    <property type="entry name" value="DNA-dir_RpoC_beta_prime"/>
</dbReference>
<dbReference type="InterPro" id="IPR000722">
    <property type="entry name" value="RNA_pol_asu"/>
</dbReference>
<dbReference type="InterPro" id="IPR000684">
    <property type="entry name" value="RNA_pol_II_repeat_euk"/>
</dbReference>
<dbReference type="InterPro" id="IPR006592">
    <property type="entry name" value="RNA_pol_N"/>
</dbReference>
<dbReference type="InterPro" id="IPR007080">
    <property type="entry name" value="RNA_pol_Rpb1_1"/>
</dbReference>
<dbReference type="InterPro" id="IPR007066">
    <property type="entry name" value="RNA_pol_Rpb1_3"/>
</dbReference>
<dbReference type="InterPro" id="IPR042102">
    <property type="entry name" value="RNA_pol_Rpb1_3_sf"/>
</dbReference>
<dbReference type="InterPro" id="IPR007083">
    <property type="entry name" value="RNA_pol_Rpb1_4"/>
</dbReference>
<dbReference type="InterPro" id="IPR007081">
    <property type="entry name" value="RNA_pol_Rpb1_5"/>
</dbReference>
<dbReference type="InterPro" id="IPR007075">
    <property type="entry name" value="RNA_pol_Rpb1_6"/>
</dbReference>
<dbReference type="InterPro" id="IPR007073">
    <property type="entry name" value="RNA_pol_Rpb1_7"/>
</dbReference>
<dbReference type="InterPro" id="IPR038593">
    <property type="entry name" value="RNA_pol_Rpb1_7_sf"/>
</dbReference>
<dbReference type="InterPro" id="IPR044893">
    <property type="entry name" value="RNA_pol_Rpb1_clamp_domain"/>
</dbReference>
<dbReference type="InterPro" id="IPR038120">
    <property type="entry name" value="Rpb1_funnel_sf"/>
</dbReference>
<dbReference type="NCBIfam" id="NF006336">
    <property type="entry name" value="PRK08566.1"/>
    <property type="match status" value="1"/>
</dbReference>
<dbReference type="PANTHER" id="PTHR19376">
    <property type="entry name" value="DNA-DIRECTED RNA POLYMERASE"/>
    <property type="match status" value="1"/>
</dbReference>
<dbReference type="PANTHER" id="PTHR19376:SF37">
    <property type="entry name" value="DNA-DIRECTED RNA POLYMERASE II SUBUNIT RPB1"/>
    <property type="match status" value="1"/>
</dbReference>
<dbReference type="Pfam" id="PF04997">
    <property type="entry name" value="RNA_pol_Rpb1_1"/>
    <property type="match status" value="1"/>
</dbReference>
<dbReference type="Pfam" id="PF00623">
    <property type="entry name" value="RNA_pol_Rpb1_2"/>
    <property type="match status" value="1"/>
</dbReference>
<dbReference type="Pfam" id="PF04983">
    <property type="entry name" value="RNA_pol_Rpb1_3"/>
    <property type="match status" value="1"/>
</dbReference>
<dbReference type="Pfam" id="PF05000">
    <property type="entry name" value="RNA_pol_Rpb1_4"/>
    <property type="match status" value="1"/>
</dbReference>
<dbReference type="Pfam" id="PF04998">
    <property type="entry name" value="RNA_pol_Rpb1_5"/>
    <property type="match status" value="1"/>
</dbReference>
<dbReference type="Pfam" id="PF04992">
    <property type="entry name" value="RNA_pol_Rpb1_6"/>
    <property type="match status" value="1"/>
</dbReference>
<dbReference type="Pfam" id="PF04990">
    <property type="entry name" value="RNA_pol_Rpb1_7"/>
    <property type="match status" value="1"/>
</dbReference>
<dbReference type="SMART" id="SM00663">
    <property type="entry name" value="RPOLA_N"/>
    <property type="match status" value="1"/>
</dbReference>
<dbReference type="SUPFAM" id="SSF64484">
    <property type="entry name" value="beta and beta-prime subunits of DNA dependent RNA-polymerase"/>
    <property type="match status" value="1"/>
</dbReference>
<dbReference type="PROSITE" id="PS00115">
    <property type="entry name" value="RNA_POL_II_REPEAT"/>
    <property type="match status" value="11"/>
</dbReference>
<proteinExistence type="evidence at protein level"/>
<feature type="chain" id="PRO_0000073937" description="DNA-directed RNA polymerase II subunit RPB1">
    <location>
        <begin position="1"/>
        <end position="1887"/>
    </location>
</feature>
<feature type="repeat" description="1">
    <location>
        <begin position="1579"/>
        <end position="1585"/>
    </location>
</feature>
<feature type="repeat" description="2; approximate">
    <location>
        <begin position="1586"/>
        <end position="1592"/>
    </location>
</feature>
<feature type="repeat" description="3">
    <location>
        <begin position="1598"/>
        <end position="1604"/>
    </location>
</feature>
<feature type="repeat" description="4">
    <location>
        <begin position="1605"/>
        <end position="1611"/>
    </location>
</feature>
<feature type="repeat" description="5">
    <location>
        <begin position="1631"/>
        <end position="1637"/>
    </location>
</feature>
<feature type="repeat" description="6">
    <location>
        <begin position="1638"/>
        <end position="1644"/>
    </location>
</feature>
<feature type="repeat" description="7">
    <location>
        <begin position="1671"/>
        <end position="1677"/>
    </location>
</feature>
<feature type="repeat" description="8">
    <location>
        <begin position="1678"/>
        <end position="1684"/>
    </location>
</feature>
<feature type="repeat" description="9">
    <location>
        <begin position="1685"/>
        <end position="1691"/>
    </location>
</feature>
<feature type="repeat" description="10">
    <location>
        <begin position="1692"/>
        <end position="1698"/>
    </location>
</feature>
<feature type="repeat" description="11">
    <location>
        <begin position="1699"/>
        <end position="1705"/>
    </location>
</feature>
<feature type="repeat" description="12">
    <location>
        <begin position="1706"/>
        <end position="1712"/>
    </location>
</feature>
<feature type="repeat" description="13">
    <location>
        <begin position="1713"/>
        <end position="1719"/>
    </location>
</feature>
<feature type="repeat" description="14">
    <location>
        <begin position="1720"/>
        <end position="1726"/>
    </location>
</feature>
<feature type="repeat" description="15">
    <location>
        <begin position="1727"/>
        <end position="1733"/>
    </location>
</feature>
<feature type="repeat" description="16">
    <location>
        <begin position="1740"/>
        <end position="1746"/>
    </location>
</feature>
<feature type="repeat" description="17">
    <location>
        <begin position="1754"/>
        <end position="1760"/>
    </location>
</feature>
<feature type="repeat" description="18">
    <location>
        <begin position="1761"/>
        <end position="1767"/>
    </location>
</feature>
<feature type="repeat" description="19">
    <location>
        <begin position="1777"/>
        <end position="1783"/>
    </location>
</feature>
<feature type="repeat" description="20">
    <location>
        <begin position="1784"/>
        <end position="1790"/>
    </location>
</feature>
<feature type="repeat" description="21">
    <location>
        <begin position="1791"/>
        <end position="1797"/>
    </location>
</feature>
<feature type="repeat" description="22">
    <location>
        <begin position="1798"/>
        <end position="1804"/>
    </location>
</feature>
<feature type="repeat" description="23">
    <location>
        <begin position="1811"/>
        <end position="1817"/>
    </location>
</feature>
<feature type="repeat" description="24; approximate">
    <location>
        <begin position="1818"/>
        <end position="1824"/>
    </location>
</feature>
<feature type="repeat" description="25">
    <location>
        <begin position="1825"/>
        <end position="1831"/>
    </location>
</feature>
<feature type="repeat" description="26">
    <location>
        <begin position="1832"/>
        <end position="1838"/>
    </location>
</feature>
<feature type="repeat" description="27">
    <location>
        <begin position="1839"/>
        <end position="1845"/>
    </location>
</feature>
<feature type="repeat" description="28">
    <location>
        <begin position="1846"/>
        <end position="1852"/>
    </location>
</feature>
<feature type="repeat" description="29">
    <location>
        <begin position="1853"/>
        <end position="1859"/>
    </location>
</feature>
<feature type="repeat" description="30">
    <location>
        <begin position="1860"/>
        <end position="1866"/>
    </location>
</feature>
<feature type="repeat" description="31">
    <location>
        <begin position="1868"/>
        <end position="1874"/>
    </location>
</feature>
<feature type="repeat" description="32">
    <location>
        <begin position="1875"/>
        <end position="1881"/>
    </location>
</feature>
<feature type="region of interest" description="Disordered" evidence="3">
    <location>
        <begin position="156"/>
        <end position="178"/>
    </location>
</feature>
<feature type="region of interest" description="Bridging helix">
    <location>
        <begin position="825"/>
        <end position="837"/>
    </location>
</feature>
<feature type="region of interest" description="Disordered" evidence="3">
    <location>
        <begin position="1528"/>
        <end position="1565"/>
    </location>
</feature>
<feature type="region of interest" description="Disordered" evidence="3">
    <location>
        <begin position="1579"/>
        <end position="1887"/>
    </location>
</feature>
<feature type="region of interest" description="C-terminal domain (CTD); 32 X 7 AA approximate tandem repeats of Y-[ST]-P-[STNVAPGN]-[STGMA]-[PSTR]-[SNAGCQKTLRIMH]">
    <location>
        <begin position="1579"/>
        <end position="1881"/>
    </location>
</feature>
<feature type="compositionally biased region" description="Low complexity" evidence="3">
    <location>
        <begin position="1529"/>
        <end position="1565"/>
    </location>
</feature>
<feature type="compositionally biased region" description="Low complexity" evidence="3">
    <location>
        <begin position="1579"/>
        <end position="1610"/>
    </location>
</feature>
<feature type="compositionally biased region" description="Low complexity" evidence="3">
    <location>
        <begin position="1626"/>
        <end position="1650"/>
    </location>
</feature>
<feature type="compositionally biased region" description="Polar residues" evidence="3">
    <location>
        <begin position="1651"/>
        <end position="1664"/>
    </location>
</feature>
<feature type="compositionally biased region" description="Low complexity" evidence="3">
    <location>
        <begin position="1665"/>
        <end position="1760"/>
    </location>
</feature>
<feature type="compositionally biased region" description="Polar residues" evidence="3">
    <location>
        <begin position="1776"/>
        <end position="1786"/>
    </location>
</feature>
<feature type="compositionally biased region" description="Low complexity" evidence="3">
    <location>
        <begin position="1788"/>
        <end position="1813"/>
    </location>
</feature>
<feature type="compositionally biased region" description="Polar residues" evidence="3">
    <location>
        <begin position="1814"/>
        <end position="1831"/>
    </location>
</feature>
<feature type="compositionally biased region" description="Low complexity" evidence="3">
    <location>
        <begin position="1832"/>
        <end position="1849"/>
    </location>
</feature>
<feature type="compositionally biased region" description="Polar residues" evidence="3">
    <location>
        <begin position="1850"/>
        <end position="1859"/>
    </location>
</feature>
<feature type="compositionally biased region" description="Low complexity" evidence="3">
    <location>
        <begin position="1860"/>
        <end position="1881"/>
    </location>
</feature>
<feature type="binding site" evidence="2">
    <location>
        <position position="67"/>
    </location>
    <ligand>
        <name>Zn(2+)</name>
        <dbReference type="ChEBI" id="CHEBI:29105"/>
        <label>1</label>
    </ligand>
</feature>
<feature type="binding site" evidence="2">
    <location>
        <position position="70"/>
    </location>
    <ligand>
        <name>Zn(2+)</name>
        <dbReference type="ChEBI" id="CHEBI:29105"/>
        <label>1</label>
    </ligand>
</feature>
<feature type="binding site" evidence="2">
    <location>
        <position position="77"/>
    </location>
    <ligand>
        <name>Zn(2+)</name>
        <dbReference type="ChEBI" id="CHEBI:29105"/>
        <label>1</label>
    </ligand>
</feature>
<feature type="binding site" evidence="2">
    <location>
        <position position="80"/>
    </location>
    <ligand>
        <name>Zn(2+)</name>
        <dbReference type="ChEBI" id="CHEBI:29105"/>
        <label>1</label>
    </ligand>
</feature>
<feature type="binding site" evidence="2">
    <location>
        <position position="107"/>
    </location>
    <ligand>
        <name>Zn(2+)</name>
        <dbReference type="ChEBI" id="CHEBI:29105"/>
        <label>2</label>
    </ligand>
</feature>
<feature type="binding site" evidence="2">
    <location>
        <position position="110"/>
    </location>
    <ligand>
        <name>Zn(2+)</name>
        <dbReference type="ChEBI" id="CHEBI:29105"/>
        <label>2</label>
    </ligand>
</feature>
<feature type="binding site" evidence="2">
    <location>
        <position position="150"/>
    </location>
    <ligand>
        <name>Zn(2+)</name>
        <dbReference type="ChEBI" id="CHEBI:29105"/>
        <label>2</label>
    </ligand>
</feature>
<feature type="binding site" evidence="2">
    <location>
        <position position="176"/>
    </location>
    <ligand>
        <name>Zn(2+)</name>
        <dbReference type="ChEBI" id="CHEBI:29105"/>
        <label>2</label>
    </ligand>
</feature>
<feature type="binding site" evidence="2">
    <location>
        <position position="487"/>
    </location>
    <ligand>
        <name>Mg(2+)</name>
        <dbReference type="ChEBI" id="CHEBI:18420"/>
        <label>1</label>
        <note>catalytic</note>
    </ligand>
</feature>
<feature type="binding site" evidence="2">
    <location>
        <position position="487"/>
    </location>
    <ligand>
        <name>Mg(2+)</name>
        <dbReference type="ChEBI" id="CHEBI:18420"/>
        <label>2</label>
        <note>ligand shared with RPB2</note>
    </ligand>
</feature>
<feature type="binding site" evidence="2">
    <location>
        <position position="489"/>
    </location>
    <ligand>
        <name>Mg(2+)</name>
        <dbReference type="ChEBI" id="CHEBI:18420"/>
        <label>1</label>
        <note>catalytic</note>
    </ligand>
</feature>
<feature type="binding site" evidence="2">
    <location>
        <position position="489"/>
    </location>
    <ligand>
        <name>Mg(2+)</name>
        <dbReference type="ChEBI" id="CHEBI:18420"/>
        <label>2</label>
        <note>ligand shared with RPB2</note>
    </ligand>
</feature>
<feature type="binding site" evidence="2">
    <location>
        <position position="491"/>
    </location>
    <ligand>
        <name>Mg(2+)</name>
        <dbReference type="ChEBI" id="CHEBI:18420"/>
        <label>1</label>
        <note>catalytic</note>
    </ligand>
</feature>
<feature type="cross-link" description="Glycyl lysine isopeptide (Lys-Gly) (interchain with G-Cter in ubiquitin)" evidence="2">
    <location>
        <position position="1260"/>
    </location>
</feature>
<feature type="sequence conflict" description="In Ref. 5; AAA28863." evidence="6" ref="5">
    <original>RAMQKS</original>
    <variation>GYAKV</variation>
    <location>
        <begin position="319"/>
        <end position="324"/>
    </location>
</feature>
<feature type="sequence conflict" description="In Ref. 5; AAA28863." evidence="6" ref="5">
    <original>F</original>
    <variation>G</variation>
    <location>
        <position position="450"/>
    </location>
</feature>
<feature type="sequence conflict" description="In Ref. 5." evidence="6" ref="5">
    <original>TLHK</original>
    <variation>RCTT</variation>
    <location>
        <begin position="455"/>
        <end position="458"/>
    </location>
</feature>
<feature type="sequence conflict" description="In Ref. 5." evidence="6" ref="5">
    <original>GHRVKVLPWS</original>
    <variation>VTGESVASST</variation>
    <location>
        <begin position="463"/>
        <end position="472"/>
    </location>
</feature>
<feature type="sequence conflict" description="In Ref. 1; AAA28868." evidence="6" ref="1">
    <original>R</original>
    <variation>H</variation>
    <location>
        <position position="741"/>
    </location>
</feature>
<feature type="sequence conflict" description="In Ref. 7; AAA28827." evidence="6" ref="7">
    <original>SMLGGAAMFIGGGSTPSMTPPMTPWANCNTPRYFSPPGHV</original>
    <variation>I</variation>
    <location>
        <begin position="1485"/>
        <end position="1524"/>
    </location>
</feature>
<feature type="sequence conflict" description="In Ref. 1; AAA28868." evidence="6" ref="1">
    <original>MTP</original>
    <variation>ELDSA</variation>
    <location>
        <begin position="1506"/>
        <end position="1508"/>
    </location>
</feature>
<feature type="sequence conflict" description="In Ref. 1; AAA28868." evidence="6" ref="1">
    <original>D</original>
    <variation>DVRKGGRG</variation>
    <location>
        <position position="1887"/>
    </location>
</feature>
<name>RPB1_DROME</name>
<protein>
    <recommendedName>
        <fullName>DNA-directed RNA polymerase II subunit RPB1</fullName>
        <shortName>RNA polymerase II subunit B1</shortName>
        <ecNumber>2.7.7.6</ecNumber>
    </recommendedName>
    <alternativeName>
        <fullName evidence="4">DNA-directed RNA polymerase III largest subunit</fullName>
    </alternativeName>
    <alternativeName>
        <fullName evidence="7">RNA polymerase II subunit A</fullName>
    </alternativeName>
</protein>